<gene>
    <name evidence="1" type="primary">ung</name>
    <name type="ordered locus">PFL_1435</name>
</gene>
<comment type="function">
    <text evidence="1">Excises uracil residues from the DNA which can arise as a result of misincorporation of dUMP residues by DNA polymerase or due to deamination of cytosine.</text>
</comment>
<comment type="catalytic activity">
    <reaction evidence="1">
        <text>Hydrolyzes single-stranded DNA or mismatched double-stranded DNA and polynucleotides, releasing free uracil.</text>
        <dbReference type="EC" id="3.2.2.27"/>
    </reaction>
</comment>
<comment type="subcellular location">
    <subcellularLocation>
        <location evidence="1">Cytoplasm</location>
    </subcellularLocation>
</comment>
<comment type="similarity">
    <text evidence="1">Belongs to the uracil-DNA glycosylase (UDG) superfamily. UNG family.</text>
</comment>
<sequence length="230" mass="25896">MTADDRIKLEPSWKEALRAEFDQPYMSELREFLRQEHAAGKEIYPPGPMIFNALNSTPLDKVKVVILGQDPYHGPGQAHGLCFSVQPGVPAPPSLVNIYKELKRDLNIDIPNHGYLQSWAEQGVLMLNTTMTVERANAASHAGKGWQFFTDRIIEVVSEHQPHLVFLLWGAHAQSKQKLIDATKHLVLTSVHPSPLSAYRGFLGCGHFSRTNKYLEQNGETPIEWRLPPL</sequence>
<proteinExistence type="inferred from homology"/>
<feature type="chain" id="PRO_1000009929" description="Uracil-DNA glycosylase">
    <location>
        <begin position="1"/>
        <end position="230"/>
    </location>
</feature>
<feature type="active site" description="Proton acceptor" evidence="1">
    <location>
        <position position="70"/>
    </location>
</feature>
<dbReference type="EC" id="3.2.2.27" evidence="1"/>
<dbReference type="EMBL" id="CP000076">
    <property type="protein sequence ID" value="AAY90719.1"/>
    <property type="molecule type" value="Genomic_DNA"/>
</dbReference>
<dbReference type="RefSeq" id="WP_011059775.1">
    <property type="nucleotide sequence ID" value="NC_004129.6"/>
</dbReference>
<dbReference type="SMR" id="Q4KGS0"/>
<dbReference type="STRING" id="220664.PFL_1435"/>
<dbReference type="KEGG" id="pfl:PFL_1435"/>
<dbReference type="PATRIC" id="fig|220664.5.peg.1467"/>
<dbReference type="eggNOG" id="COG0692">
    <property type="taxonomic scope" value="Bacteria"/>
</dbReference>
<dbReference type="HOGENOM" id="CLU_032162_3_1_6"/>
<dbReference type="Proteomes" id="UP000008540">
    <property type="component" value="Chromosome"/>
</dbReference>
<dbReference type="GO" id="GO:0005737">
    <property type="term" value="C:cytoplasm"/>
    <property type="evidence" value="ECO:0007669"/>
    <property type="project" value="UniProtKB-SubCell"/>
</dbReference>
<dbReference type="GO" id="GO:0004844">
    <property type="term" value="F:uracil DNA N-glycosylase activity"/>
    <property type="evidence" value="ECO:0007669"/>
    <property type="project" value="UniProtKB-UniRule"/>
</dbReference>
<dbReference type="GO" id="GO:0097510">
    <property type="term" value="P:base-excision repair, AP site formation via deaminated base removal"/>
    <property type="evidence" value="ECO:0007669"/>
    <property type="project" value="TreeGrafter"/>
</dbReference>
<dbReference type="CDD" id="cd10027">
    <property type="entry name" value="UDG-F1-like"/>
    <property type="match status" value="1"/>
</dbReference>
<dbReference type="FunFam" id="3.40.470.10:FF:000001">
    <property type="entry name" value="Uracil-DNA glycosylase"/>
    <property type="match status" value="1"/>
</dbReference>
<dbReference type="Gene3D" id="3.40.470.10">
    <property type="entry name" value="Uracil-DNA glycosylase-like domain"/>
    <property type="match status" value="1"/>
</dbReference>
<dbReference type="HAMAP" id="MF_00148">
    <property type="entry name" value="UDG"/>
    <property type="match status" value="1"/>
</dbReference>
<dbReference type="InterPro" id="IPR002043">
    <property type="entry name" value="UDG_fam1"/>
</dbReference>
<dbReference type="InterPro" id="IPR018085">
    <property type="entry name" value="Ura-DNA_Glyclase_AS"/>
</dbReference>
<dbReference type="InterPro" id="IPR005122">
    <property type="entry name" value="Uracil-DNA_glycosylase-like"/>
</dbReference>
<dbReference type="InterPro" id="IPR036895">
    <property type="entry name" value="Uracil-DNA_glycosylase-like_sf"/>
</dbReference>
<dbReference type="NCBIfam" id="NF003588">
    <property type="entry name" value="PRK05254.1-1"/>
    <property type="match status" value="1"/>
</dbReference>
<dbReference type="NCBIfam" id="NF003589">
    <property type="entry name" value="PRK05254.1-2"/>
    <property type="match status" value="1"/>
</dbReference>
<dbReference type="NCBIfam" id="NF003591">
    <property type="entry name" value="PRK05254.1-4"/>
    <property type="match status" value="1"/>
</dbReference>
<dbReference type="NCBIfam" id="NF003592">
    <property type="entry name" value="PRK05254.1-5"/>
    <property type="match status" value="1"/>
</dbReference>
<dbReference type="NCBIfam" id="TIGR00628">
    <property type="entry name" value="ung"/>
    <property type="match status" value="1"/>
</dbReference>
<dbReference type="PANTHER" id="PTHR11264">
    <property type="entry name" value="URACIL-DNA GLYCOSYLASE"/>
    <property type="match status" value="1"/>
</dbReference>
<dbReference type="PANTHER" id="PTHR11264:SF0">
    <property type="entry name" value="URACIL-DNA GLYCOSYLASE"/>
    <property type="match status" value="1"/>
</dbReference>
<dbReference type="Pfam" id="PF03167">
    <property type="entry name" value="UDG"/>
    <property type="match status" value="1"/>
</dbReference>
<dbReference type="SMART" id="SM00986">
    <property type="entry name" value="UDG"/>
    <property type="match status" value="1"/>
</dbReference>
<dbReference type="SMART" id="SM00987">
    <property type="entry name" value="UreE_C"/>
    <property type="match status" value="1"/>
</dbReference>
<dbReference type="SUPFAM" id="SSF52141">
    <property type="entry name" value="Uracil-DNA glycosylase-like"/>
    <property type="match status" value="1"/>
</dbReference>
<dbReference type="PROSITE" id="PS00130">
    <property type="entry name" value="U_DNA_GLYCOSYLASE"/>
    <property type="match status" value="1"/>
</dbReference>
<organism>
    <name type="scientific">Pseudomonas fluorescens (strain ATCC BAA-477 / NRRL B-23932 / Pf-5)</name>
    <dbReference type="NCBI Taxonomy" id="220664"/>
    <lineage>
        <taxon>Bacteria</taxon>
        <taxon>Pseudomonadati</taxon>
        <taxon>Pseudomonadota</taxon>
        <taxon>Gammaproteobacteria</taxon>
        <taxon>Pseudomonadales</taxon>
        <taxon>Pseudomonadaceae</taxon>
        <taxon>Pseudomonas</taxon>
    </lineage>
</organism>
<protein>
    <recommendedName>
        <fullName evidence="1">Uracil-DNA glycosylase</fullName>
        <shortName evidence="1">UDG</shortName>
        <ecNumber evidence="1">3.2.2.27</ecNumber>
    </recommendedName>
</protein>
<keyword id="KW-0963">Cytoplasm</keyword>
<keyword id="KW-0227">DNA damage</keyword>
<keyword id="KW-0234">DNA repair</keyword>
<keyword id="KW-0378">Hydrolase</keyword>
<name>UNG_PSEF5</name>
<evidence type="ECO:0000255" key="1">
    <source>
        <dbReference type="HAMAP-Rule" id="MF_00148"/>
    </source>
</evidence>
<reference key="1">
    <citation type="journal article" date="2005" name="Nat. Biotechnol.">
        <title>Complete genome sequence of the plant commensal Pseudomonas fluorescens Pf-5.</title>
        <authorList>
            <person name="Paulsen I.T."/>
            <person name="Press C.M."/>
            <person name="Ravel J."/>
            <person name="Kobayashi D.Y."/>
            <person name="Myers G.S.A."/>
            <person name="Mavrodi D.V."/>
            <person name="DeBoy R.T."/>
            <person name="Seshadri R."/>
            <person name="Ren Q."/>
            <person name="Madupu R."/>
            <person name="Dodson R.J."/>
            <person name="Durkin A.S."/>
            <person name="Brinkac L.M."/>
            <person name="Daugherty S.C."/>
            <person name="Sullivan S.A."/>
            <person name="Rosovitz M.J."/>
            <person name="Gwinn M.L."/>
            <person name="Zhou L."/>
            <person name="Schneider D.J."/>
            <person name="Cartinhour S.W."/>
            <person name="Nelson W.C."/>
            <person name="Weidman J."/>
            <person name="Watkins K."/>
            <person name="Tran K."/>
            <person name="Khouri H."/>
            <person name="Pierson E.A."/>
            <person name="Pierson L.S. III"/>
            <person name="Thomashow L.S."/>
            <person name="Loper J.E."/>
        </authorList>
    </citation>
    <scope>NUCLEOTIDE SEQUENCE [LARGE SCALE GENOMIC DNA]</scope>
    <source>
        <strain>ATCC BAA-477 / NRRL B-23932 / Pf-5</strain>
    </source>
</reference>
<accession>Q4KGS0</accession>